<protein>
    <recommendedName>
        <fullName evidence="1">DNA mismatch repair protein MutS</fullName>
    </recommendedName>
</protein>
<sequence length="927" mass="102313">MTANAELLQGSLFGDLEPQANAESCSETITRALRNDLSDQELVDESLKRPRNRHKPTSVPSIPLDSESQEQLETADNDNDLPAWAHHTLVDPEQLTPMLRHYVELKAKHPERILLYRLGDFFECFFEDAIQLSRLLELTLTGKEGGKGIGRVPMAGVPHHAAERYCTELIRHGLSVAICDQLETTPSKGALLKRDITRVLTPGTVLAEGMLTARRNNWLAAVVVEPAQGNQPFCWGLANADVSTGEFLVTQREGSAELHQHLAQLEASELIMAQKIGESSRPAWCPEQLFLTTMATTPFSQPEAERTLLNHYRLSTLDGLGLQEVPLALRAAGGLLTYLRDTQPLAENVDEGIAPMPLEHPLTVFAGDALVLDAQTRRNLELTSTQRDGQFQGSLLWAVDRTLTAMGARCLRRWIEAPLLDSKAIRARQAVVNHLVETRSLRHSLRRLLRPMGDLERLAGRAGAGHAGARELVAIADGIERLPRLAEQLHNALRSAPNWLDNLLTLDKSLPKLAASIREQLINNPPLSLSEGGLMHDNVDPLLDGLRNQLDDQDTWLAGQEVQERKLSGNPNLRLQYHRTFGYFLAVSKAKASMVPDHWIRRQTLANEERFITPDLKTREGQIFQLRARACQREYELFCQLREQVGKQATSIRKAARAVAGLDALVGLAEVAATGDYCCPEIDNSRELQLKTCRHPVVEQLLVERSFIPNDVELGKDIDLVVLTGPNASGKSCYLRQIGLIQLLAQVGSWVPAKQARVGIADRIFTRVGAVDDLAAGQSTFMVEMAETANILHHASDRSLVLLDEIGRGTATFDGLSIAWAVSEHLARDLRSRTVFATHYHELNGLSQELTNVANSQVLVEETGDDLVFLHQVAAGGANRSYGIEAARLAGVPDDVVQRARQVLAQLHDDDSSLPALLSAKTIKRQS</sequence>
<name>MUTS_PROM3</name>
<keyword id="KW-0067">ATP-binding</keyword>
<keyword id="KW-0227">DNA damage</keyword>
<keyword id="KW-0234">DNA repair</keyword>
<keyword id="KW-0238">DNA-binding</keyword>
<keyword id="KW-0547">Nucleotide-binding</keyword>
<evidence type="ECO:0000255" key="1">
    <source>
        <dbReference type="HAMAP-Rule" id="MF_00096"/>
    </source>
</evidence>
<evidence type="ECO:0000256" key="2">
    <source>
        <dbReference type="SAM" id="MobiDB-lite"/>
    </source>
</evidence>
<proteinExistence type="inferred from homology"/>
<reference key="1">
    <citation type="journal article" date="2007" name="PLoS Genet.">
        <title>Patterns and implications of gene gain and loss in the evolution of Prochlorococcus.</title>
        <authorList>
            <person name="Kettler G.C."/>
            <person name="Martiny A.C."/>
            <person name="Huang K."/>
            <person name="Zucker J."/>
            <person name="Coleman M.L."/>
            <person name="Rodrigue S."/>
            <person name="Chen F."/>
            <person name="Lapidus A."/>
            <person name="Ferriera S."/>
            <person name="Johnson J."/>
            <person name="Steglich C."/>
            <person name="Church G.M."/>
            <person name="Richardson P."/>
            <person name="Chisholm S.W."/>
        </authorList>
    </citation>
    <scope>NUCLEOTIDE SEQUENCE [LARGE SCALE GENOMIC DNA]</scope>
    <source>
        <strain>MIT 9303</strain>
    </source>
</reference>
<feature type="chain" id="PRO_0000335199" description="DNA mismatch repair protein MutS">
    <location>
        <begin position="1"/>
        <end position="927"/>
    </location>
</feature>
<feature type="region of interest" description="Disordered" evidence="2">
    <location>
        <begin position="44"/>
        <end position="80"/>
    </location>
</feature>
<feature type="compositionally biased region" description="Acidic residues" evidence="2">
    <location>
        <begin position="67"/>
        <end position="79"/>
    </location>
</feature>
<feature type="binding site" evidence="1">
    <location>
        <begin position="725"/>
        <end position="732"/>
    </location>
    <ligand>
        <name>ATP</name>
        <dbReference type="ChEBI" id="CHEBI:30616"/>
    </ligand>
</feature>
<organism>
    <name type="scientific">Prochlorococcus marinus (strain MIT 9303)</name>
    <dbReference type="NCBI Taxonomy" id="59922"/>
    <lineage>
        <taxon>Bacteria</taxon>
        <taxon>Bacillati</taxon>
        <taxon>Cyanobacteriota</taxon>
        <taxon>Cyanophyceae</taxon>
        <taxon>Synechococcales</taxon>
        <taxon>Prochlorococcaceae</taxon>
        <taxon>Prochlorococcus</taxon>
    </lineage>
</organism>
<accession>A2C5T5</accession>
<dbReference type="EMBL" id="CP000554">
    <property type="protein sequence ID" value="ABM76845.1"/>
    <property type="molecule type" value="Genomic_DNA"/>
</dbReference>
<dbReference type="RefSeq" id="WP_011824777.1">
    <property type="nucleotide sequence ID" value="NC_008820.1"/>
</dbReference>
<dbReference type="SMR" id="A2C5T5"/>
<dbReference type="STRING" id="59922.P9303_00881"/>
<dbReference type="KEGG" id="pmf:P9303_00881"/>
<dbReference type="HOGENOM" id="CLU_002472_1_3_3"/>
<dbReference type="BioCyc" id="PMAR59922:G1G80-84-MONOMER"/>
<dbReference type="Proteomes" id="UP000002274">
    <property type="component" value="Chromosome"/>
</dbReference>
<dbReference type="GO" id="GO:0005829">
    <property type="term" value="C:cytosol"/>
    <property type="evidence" value="ECO:0007669"/>
    <property type="project" value="TreeGrafter"/>
</dbReference>
<dbReference type="GO" id="GO:0005524">
    <property type="term" value="F:ATP binding"/>
    <property type="evidence" value="ECO:0007669"/>
    <property type="project" value="UniProtKB-UniRule"/>
</dbReference>
<dbReference type="GO" id="GO:0140664">
    <property type="term" value="F:ATP-dependent DNA damage sensor activity"/>
    <property type="evidence" value="ECO:0007669"/>
    <property type="project" value="InterPro"/>
</dbReference>
<dbReference type="GO" id="GO:0003684">
    <property type="term" value="F:damaged DNA binding"/>
    <property type="evidence" value="ECO:0007669"/>
    <property type="project" value="UniProtKB-UniRule"/>
</dbReference>
<dbReference type="GO" id="GO:0030983">
    <property type="term" value="F:mismatched DNA binding"/>
    <property type="evidence" value="ECO:0007669"/>
    <property type="project" value="InterPro"/>
</dbReference>
<dbReference type="GO" id="GO:0006298">
    <property type="term" value="P:mismatch repair"/>
    <property type="evidence" value="ECO:0007669"/>
    <property type="project" value="UniProtKB-UniRule"/>
</dbReference>
<dbReference type="CDD" id="cd03284">
    <property type="entry name" value="ABC_MutS1"/>
    <property type="match status" value="1"/>
</dbReference>
<dbReference type="FunFam" id="1.10.1420.10:FF:000001">
    <property type="entry name" value="DNA mismatch repair protein MutS"/>
    <property type="match status" value="1"/>
</dbReference>
<dbReference type="FunFam" id="3.40.50.300:FF:000870">
    <property type="entry name" value="MutS protein homolog 4"/>
    <property type="match status" value="1"/>
</dbReference>
<dbReference type="Gene3D" id="1.10.1420.10">
    <property type="match status" value="2"/>
</dbReference>
<dbReference type="Gene3D" id="3.40.1170.10">
    <property type="entry name" value="DNA repair protein MutS, domain I"/>
    <property type="match status" value="1"/>
</dbReference>
<dbReference type="Gene3D" id="3.30.420.110">
    <property type="entry name" value="MutS, connector domain"/>
    <property type="match status" value="1"/>
</dbReference>
<dbReference type="Gene3D" id="3.40.50.300">
    <property type="entry name" value="P-loop containing nucleotide triphosphate hydrolases"/>
    <property type="match status" value="1"/>
</dbReference>
<dbReference type="HAMAP" id="MF_00096">
    <property type="entry name" value="MutS"/>
    <property type="match status" value="1"/>
</dbReference>
<dbReference type="InterPro" id="IPR005748">
    <property type="entry name" value="DNA_mismatch_repair_MutS"/>
</dbReference>
<dbReference type="InterPro" id="IPR007695">
    <property type="entry name" value="DNA_mismatch_repair_MutS-lik_N"/>
</dbReference>
<dbReference type="InterPro" id="IPR017261">
    <property type="entry name" value="DNA_mismatch_repair_MutS/MSH"/>
</dbReference>
<dbReference type="InterPro" id="IPR000432">
    <property type="entry name" value="DNA_mismatch_repair_MutS_C"/>
</dbReference>
<dbReference type="InterPro" id="IPR007861">
    <property type="entry name" value="DNA_mismatch_repair_MutS_clamp"/>
</dbReference>
<dbReference type="InterPro" id="IPR007696">
    <property type="entry name" value="DNA_mismatch_repair_MutS_core"/>
</dbReference>
<dbReference type="InterPro" id="IPR016151">
    <property type="entry name" value="DNA_mismatch_repair_MutS_N"/>
</dbReference>
<dbReference type="InterPro" id="IPR036187">
    <property type="entry name" value="DNA_mismatch_repair_MutS_sf"/>
</dbReference>
<dbReference type="InterPro" id="IPR007860">
    <property type="entry name" value="DNA_mmatch_repair_MutS_con_dom"/>
</dbReference>
<dbReference type="InterPro" id="IPR045076">
    <property type="entry name" value="MutS"/>
</dbReference>
<dbReference type="InterPro" id="IPR036678">
    <property type="entry name" value="MutS_con_dom_sf"/>
</dbReference>
<dbReference type="InterPro" id="IPR027417">
    <property type="entry name" value="P-loop_NTPase"/>
</dbReference>
<dbReference type="NCBIfam" id="TIGR01070">
    <property type="entry name" value="mutS1"/>
    <property type="match status" value="1"/>
</dbReference>
<dbReference type="NCBIfam" id="NF003810">
    <property type="entry name" value="PRK05399.1"/>
    <property type="match status" value="1"/>
</dbReference>
<dbReference type="PANTHER" id="PTHR11361:SF34">
    <property type="entry name" value="DNA MISMATCH REPAIR PROTEIN MSH1, MITOCHONDRIAL"/>
    <property type="match status" value="1"/>
</dbReference>
<dbReference type="PANTHER" id="PTHR11361">
    <property type="entry name" value="DNA MISMATCH REPAIR PROTEIN MUTS FAMILY MEMBER"/>
    <property type="match status" value="1"/>
</dbReference>
<dbReference type="Pfam" id="PF01624">
    <property type="entry name" value="MutS_I"/>
    <property type="match status" value="1"/>
</dbReference>
<dbReference type="Pfam" id="PF05188">
    <property type="entry name" value="MutS_II"/>
    <property type="match status" value="1"/>
</dbReference>
<dbReference type="Pfam" id="PF05192">
    <property type="entry name" value="MutS_III"/>
    <property type="match status" value="1"/>
</dbReference>
<dbReference type="Pfam" id="PF05190">
    <property type="entry name" value="MutS_IV"/>
    <property type="match status" value="1"/>
</dbReference>
<dbReference type="Pfam" id="PF00488">
    <property type="entry name" value="MutS_V"/>
    <property type="match status" value="1"/>
</dbReference>
<dbReference type="PIRSF" id="PIRSF037677">
    <property type="entry name" value="DNA_mis_repair_Msh6"/>
    <property type="match status" value="1"/>
</dbReference>
<dbReference type="SMART" id="SM00534">
    <property type="entry name" value="MUTSac"/>
    <property type="match status" value="1"/>
</dbReference>
<dbReference type="SMART" id="SM00533">
    <property type="entry name" value="MUTSd"/>
    <property type="match status" value="1"/>
</dbReference>
<dbReference type="SUPFAM" id="SSF55271">
    <property type="entry name" value="DNA repair protein MutS, domain I"/>
    <property type="match status" value="1"/>
</dbReference>
<dbReference type="SUPFAM" id="SSF53150">
    <property type="entry name" value="DNA repair protein MutS, domain II"/>
    <property type="match status" value="1"/>
</dbReference>
<dbReference type="SUPFAM" id="SSF48334">
    <property type="entry name" value="DNA repair protein MutS, domain III"/>
    <property type="match status" value="1"/>
</dbReference>
<dbReference type="SUPFAM" id="SSF52540">
    <property type="entry name" value="P-loop containing nucleoside triphosphate hydrolases"/>
    <property type="match status" value="1"/>
</dbReference>
<dbReference type="PROSITE" id="PS00486">
    <property type="entry name" value="DNA_MISMATCH_REPAIR_2"/>
    <property type="match status" value="1"/>
</dbReference>
<comment type="function">
    <text evidence="1">This protein is involved in the repair of mismatches in DNA. It is possible that it carries out the mismatch recognition step. This protein has a weak ATPase activity.</text>
</comment>
<comment type="similarity">
    <text evidence="1">Belongs to the DNA mismatch repair MutS family.</text>
</comment>
<gene>
    <name evidence="1" type="primary">mutS</name>
    <name type="ordered locus">P9303_00881</name>
</gene>